<sequence length="149" mass="16669">MVSFFDIYTKASIVEAVRFSFLNTFQLKELGLPIKEIAVPLGTLVFLFVVIITLIPLLIIGNLIWTNLRLIERENTQQYQLVFGYSLIVSDIVGFAIVFFGAILGTNLKSVELFIALGWMMMLGSLIALGTTANLVSSIYLYIKLALKR</sequence>
<organism>
    <name type="scientific">Mycoplasma pneumoniae (strain ATCC 29342 / M129 / Subtype 1)</name>
    <name type="common">Mycoplasmoides pneumoniae</name>
    <dbReference type="NCBI Taxonomy" id="272634"/>
    <lineage>
        <taxon>Bacteria</taxon>
        <taxon>Bacillati</taxon>
        <taxon>Mycoplasmatota</taxon>
        <taxon>Mycoplasmoidales</taxon>
        <taxon>Mycoplasmoidaceae</taxon>
        <taxon>Mycoplasmoides</taxon>
    </lineage>
</organism>
<protein>
    <recommendedName>
        <fullName>Uncharacterized protein MPN_129</fullName>
    </recommendedName>
</protein>
<comment type="subcellular location">
    <subcellularLocation>
        <location evidence="2">Cell membrane</location>
        <topology evidence="2">Multi-pass membrane protein</topology>
    </subcellularLocation>
</comment>
<comment type="similarity">
    <text evidence="2">To M.pneumoniae MPN_090.</text>
</comment>
<evidence type="ECO:0000255" key="1"/>
<evidence type="ECO:0000305" key="2"/>
<keyword id="KW-1003">Cell membrane</keyword>
<keyword id="KW-0472">Membrane</keyword>
<keyword id="KW-1185">Reference proteome</keyword>
<keyword id="KW-0812">Transmembrane</keyword>
<keyword id="KW-1133">Transmembrane helix</keyword>
<dbReference type="EMBL" id="U00089">
    <property type="protein sequence ID" value="AAB95673.1"/>
    <property type="molecule type" value="Genomic_DNA"/>
</dbReference>
<dbReference type="PIR" id="S73351">
    <property type="entry name" value="S73351"/>
</dbReference>
<dbReference type="RefSeq" id="NP_109817.1">
    <property type="nucleotide sequence ID" value="NC_000912.1"/>
</dbReference>
<dbReference type="RefSeq" id="WP_010874486.1">
    <property type="nucleotide sequence ID" value="NZ_OU342337.1"/>
</dbReference>
<dbReference type="STRING" id="272634.MPN_129"/>
<dbReference type="EnsemblBacteria" id="AAB95673">
    <property type="protein sequence ID" value="AAB95673"/>
    <property type="gene ID" value="MPN_129"/>
</dbReference>
<dbReference type="KEGG" id="mpn:MPN_129"/>
<dbReference type="PATRIC" id="fig|272634.6.peg.139"/>
<dbReference type="HOGENOM" id="CLU_1957166_0_0_14"/>
<dbReference type="BioCyc" id="MPNE272634:G1GJ3-215-MONOMER"/>
<dbReference type="Proteomes" id="UP000000808">
    <property type="component" value="Chromosome"/>
</dbReference>
<dbReference type="GO" id="GO:0005886">
    <property type="term" value="C:plasma membrane"/>
    <property type="evidence" value="ECO:0007669"/>
    <property type="project" value="UniProtKB-SubCell"/>
</dbReference>
<feature type="chain" id="PRO_0000210652" description="Uncharacterized protein MPN_129">
    <location>
        <begin position="1"/>
        <end position="149"/>
    </location>
</feature>
<feature type="transmembrane region" description="Helical" evidence="1">
    <location>
        <begin position="39"/>
        <end position="61"/>
    </location>
</feature>
<feature type="transmembrane region" description="Helical" evidence="1">
    <location>
        <begin position="82"/>
        <end position="104"/>
    </location>
</feature>
<feature type="transmembrane region" description="Helical" evidence="1">
    <location>
        <begin position="119"/>
        <end position="141"/>
    </location>
</feature>
<name>Y129_MYCPN</name>
<accession>P75346</accession>
<proteinExistence type="predicted"/>
<reference key="1">
    <citation type="journal article" date="1996" name="Nucleic Acids Res.">
        <title>Complete sequence analysis of the genome of the bacterium Mycoplasma pneumoniae.</title>
        <authorList>
            <person name="Himmelreich R."/>
            <person name="Hilbert H."/>
            <person name="Plagens H."/>
            <person name="Pirkl E."/>
            <person name="Li B.-C."/>
            <person name="Herrmann R."/>
        </authorList>
    </citation>
    <scope>NUCLEOTIDE SEQUENCE [LARGE SCALE GENOMIC DNA]</scope>
    <source>
        <strain>ATCC 29342 / M129 / Subtype 1</strain>
    </source>
</reference>
<gene>
    <name type="ordered locus">MPN_129</name>
    <name type="ORF">C09_orf149b</name>
    <name type="ORF">MP025</name>
</gene>